<feature type="chain" id="PRO_0000076090" description="Polyglutamine-binding protein 1">
    <location>
        <begin position="1"/>
        <end position="263"/>
    </location>
</feature>
<feature type="domain" description="WW" evidence="2">
    <location>
        <begin position="46"/>
        <end position="80"/>
    </location>
</feature>
<feature type="repeat" description="1-1; approximate">
    <location>
        <begin position="104"/>
        <end position="110"/>
    </location>
</feature>
<feature type="repeat" description="1-2">
    <location>
        <begin position="111"/>
        <end position="117"/>
    </location>
</feature>
<feature type="repeat" description="1-3; approximate">
    <location>
        <begin position="118"/>
        <end position="124"/>
    </location>
</feature>
<feature type="repeat" description="1-4; approximate">
    <location>
        <begin position="125"/>
        <end position="131"/>
    </location>
</feature>
<feature type="repeat" description="1-5; approximate">
    <location>
        <begin position="132"/>
        <end position="138"/>
    </location>
</feature>
<feature type="repeat" description="2-1">
    <location>
        <begin position="139"/>
        <end position="140"/>
    </location>
</feature>
<feature type="repeat" description="2-2">
    <location>
        <begin position="141"/>
        <end position="142"/>
    </location>
</feature>
<feature type="repeat" description="2-3">
    <location>
        <begin position="143"/>
        <end position="144"/>
    </location>
</feature>
<feature type="repeat" description="3-1">
    <location>
        <begin position="150"/>
        <end position="151"/>
    </location>
</feature>
<feature type="repeat" description="3-2">
    <location>
        <begin position="152"/>
        <end position="153"/>
    </location>
</feature>
<feature type="repeat" description="3-3">
    <location>
        <begin position="154"/>
        <end position="155"/>
    </location>
</feature>
<feature type="repeat" description="3-4">
    <location>
        <begin position="156"/>
        <end position="157"/>
    </location>
</feature>
<feature type="repeat" description="3-5">
    <location>
        <begin position="158"/>
        <end position="159"/>
    </location>
</feature>
<feature type="repeat" description="3-6">
    <location>
        <begin position="160"/>
        <end position="161"/>
    </location>
</feature>
<feature type="region of interest" description="Disordered" evidence="1">
    <location>
        <begin position="94"/>
        <end position="263"/>
    </location>
</feature>
<feature type="region of interest" description="5 X 7 AA approximate tandem repeats of D-R-[NS]-H-E-K-S">
    <location>
        <begin position="104"/>
        <end position="138"/>
    </location>
</feature>
<feature type="region of interest" description="3 X 2 AA tandem repeats of [DE]-R">
    <location>
        <begin position="139"/>
        <end position="144"/>
    </location>
</feature>
<feature type="region of interest" description="6 X 2 AA tandem repeats of [DE]-R">
    <location>
        <begin position="150"/>
        <end position="161"/>
    </location>
</feature>
<feature type="region of interest" description="Important for interaction with TXNL4A" evidence="1">
    <location>
        <begin position="243"/>
        <end position="253"/>
    </location>
</feature>
<feature type="compositionally biased region" description="Basic and acidic residues" evidence="3">
    <location>
        <begin position="99"/>
        <end position="173"/>
    </location>
</feature>
<feature type="modified residue" description="Phosphoserine" evidence="1">
    <location>
        <position position="245"/>
    </location>
</feature>
<feature type="sequence conflict" description="In Ref. 3; AAH51673." evidence="6" ref="3">
    <original>G</original>
    <variation>S</variation>
    <location>
        <position position="15"/>
    </location>
</feature>
<feature type="sequence conflict" description="In Ref. 1; CAB59205/CAC15062." evidence="6" ref="1">
    <original>H</original>
    <variation>L</variation>
    <location>
        <position position="177"/>
    </location>
</feature>
<feature type="sequence conflict" description="In Ref. 1; CAB59205/CAC15062." evidence="6" ref="1">
    <original>A</original>
    <variation>V</variation>
    <location>
        <position position="183"/>
    </location>
</feature>
<sequence length="263" mass="30597">MPLPVALQTRLAKRGILKHLEPEPEEEIIAEDYDDDPVDYEATRIEGLPPSWYKVFDPSCGLPYYWNVETDLVSWLSPHDPNFVVTKSAKKVRNNNADAEDKSDRNLEKVDRNHEKSDRSHEKPDRSHEKADRNHEKNDRERERNYDKVDRERDRDRERERAFDKADREEGKDRRHHRREELAPYPKNKKATSRKDEELDPMDPSSYSDAPRGTWSTGLPKRNEAKTGADTTAAGPLFQQRPYPSPGAVLRANAEASRTKQQD</sequence>
<organism>
    <name type="scientific">Mus musculus</name>
    <name type="common">Mouse</name>
    <dbReference type="NCBI Taxonomy" id="10090"/>
    <lineage>
        <taxon>Eukaryota</taxon>
        <taxon>Metazoa</taxon>
        <taxon>Chordata</taxon>
        <taxon>Craniata</taxon>
        <taxon>Vertebrata</taxon>
        <taxon>Euteleostomi</taxon>
        <taxon>Mammalia</taxon>
        <taxon>Eutheria</taxon>
        <taxon>Euarchontoglires</taxon>
        <taxon>Glires</taxon>
        <taxon>Rodentia</taxon>
        <taxon>Myomorpha</taxon>
        <taxon>Muroidea</taxon>
        <taxon>Muridae</taxon>
        <taxon>Murinae</taxon>
        <taxon>Mus</taxon>
        <taxon>Mus</taxon>
    </lineage>
</organism>
<name>PQBP1_MOUSE</name>
<evidence type="ECO:0000250" key="1">
    <source>
        <dbReference type="UniProtKB" id="O60828"/>
    </source>
</evidence>
<evidence type="ECO:0000255" key="2">
    <source>
        <dbReference type="PROSITE-ProRule" id="PRU00224"/>
    </source>
</evidence>
<evidence type="ECO:0000256" key="3">
    <source>
        <dbReference type="SAM" id="MobiDB-lite"/>
    </source>
</evidence>
<evidence type="ECO:0000269" key="4">
    <source>
    </source>
</evidence>
<evidence type="ECO:0000269" key="5">
    <source>
    </source>
</evidence>
<evidence type="ECO:0000305" key="6"/>
<gene>
    <name type="primary">Pqbp1</name>
    <name type="synonym">Npw38</name>
</gene>
<proteinExistence type="evidence at protein level"/>
<keyword id="KW-0391">Immunity</keyword>
<keyword id="KW-0399">Innate immunity</keyword>
<keyword id="KW-0507">mRNA processing</keyword>
<keyword id="KW-0508">mRNA splicing</keyword>
<keyword id="KW-0539">Nucleus</keyword>
<keyword id="KW-0597">Phosphoprotein</keyword>
<keyword id="KW-1185">Reference proteome</keyword>
<keyword id="KW-0677">Repeat</keyword>
<keyword id="KW-0804">Transcription</keyword>
<keyword id="KW-0805">Transcription regulation</keyword>
<protein>
    <recommendedName>
        <fullName>Polyglutamine-binding protein 1</fullName>
        <shortName>PQBP-1</shortName>
    </recommendedName>
    <alternativeName>
        <fullName>38 kDa nuclear protein containing a WW domain</fullName>
        <shortName>Npw38</shortName>
    </alternativeName>
    <alternativeName>
        <fullName>Polyglutamine tract-binding protein 1</fullName>
    </alternativeName>
</protein>
<dbReference type="EMBL" id="AJ250406">
    <property type="protein sequence ID" value="CAB59205.1"/>
    <property type="molecule type" value="mRNA"/>
</dbReference>
<dbReference type="EMBL" id="AJ296289">
    <property type="protein sequence ID" value="CAC15062.1"/>
    <property type="molecule type" value="Genomic_DNA"/>
</dbReference>
<dbReference type="EMBL" id="AK077652">
    <property type="protein sequence ID" value="BAC36928.1"/>
    <property type="molecule type" value="mRNA"/>
</dbReference>
<dbReference type="EMBL" id="BC009657">
    <property type="protein sequence ID" value="AAH09657.1"/>
    <property type="molecule type" value="mRNA"/>
</dbReference>
<dbReference type="EMBL" id="BC051673">
    <property type="protein sequence ID" value="AAH51673.1"/>
    <property type="molecule type" value="mRNA"/>
</dbReference>
<dbReference type="CCDS" id="CCDS29977.1"/>
<dbReference type="RefSeq" id="NP_001239457.1">
    <property type="nucleotide sequence ID" value="NM_001252528.2"/>
</dbReference>
<dbReference type="RefSeq" id="NP_001239458.2">
    <property type="nucleotide sequence ID" value="NM_001252529.2"/>
</dbReference>
<dbReference type="RefSeq" id="NP_001413180.1">
    <property type="nucleotide sequence ID" value="NM_001426251.1"/>
</dbReference>
<dbReference type="RefSeq" id="NP_062351.2">
    <property type="nucleotide sequence ID" value="NM_019478.4"/>
</dbReference>
<dbReference type="RefSeq" id="XP_006527717.1">
    <property type="nucleotide sequence ID" value="XM_006527654.3"/>
</dbReference>
<dbReference type="SMR" id="Q91VJ5"/>
<dbReference type="BioGRID" id="207696">
    <property type="interactions" value="31"/>
</dbReference>
<dbReference type="FunCoup" id="Q91VJ5">
    <property type="interactions" value="2196"/>
</dbReference>
<dbReference type="IntAct" id="Q91VJ5">
    <property type="interactions" value="25"/>
</dbReference>
<dbReference type="STRING" id="10090.ENSMUSP00000111318"/>
<dbReference type="iPTMnet" id="Q91VJ5"/>
<dbReference type="PhosphoSitePlus" id="Q91VJ5"/>
<dbReference type="jPOST" id="Q91VJ5"/>
<dbReference type="PaxDb" id="10090-ENSMUSP00000111319"/>
<dbReference type="ProteomicsDB" id="291732"/>
<dbReference type="Pumba" id="Q91VJ5"/>
<dbReference type="Antibodypedia" id="454">
    <property type="antibodies" value="165 antibodies from 26 providers"/>
</dbReference>
<dbReference type="DNASU" id="54633"/>
<dbReference type="Ensembl" id="ENSMUST00000033497.9">
    <property type="protein sequence ID" value="ENSMUSP00000033497.3"/>
    <property type="gene ID" value="ENSMUSG00000031157.11"/>
</dbReference>
<dbReference type="Ensembl" id="ENSMUST00000115654.8">
    <property type="protein sequence ID" value="ENSMUSP00000111318.2"/>
    <property type="gene ID" value="ENSMUSG00000031157.11"/>
</dbReference>
<dbReference type="Ensembl" id="ENSMUST00000115655.8">
    <property type="protein sequence ID" value="ENSMUSP00000111319.2"/>
    <property type="gene ID" value="ENSMUSG00000031157.11"/>
</dbReference>
<dbReference type="GeneID" id="54633"/>
<dbReference type="KEGG" id="mmu:54633"/>
<dbReference type="UCSC" id="uc009snd.2">
    <property type="organism name" value="mouse"/>
</dbReference>
<dbReference type="AGR" id="MGI:1859638"/>
<dbReference type="CTD" id="10084"/>
<dbReference type="MGI" id="MGI:1859638">
    <property type="gene designation" value="Pqbp1"/>
</dbReference>
<dbReference type="VEuPathDB" id="HostDB:ENSMUSG00000031157"/>
<dbReference type="eggNOG" id="KOG3427">
    <property type="taxonomic scope" value="Eukaryota"/>
</dbReference>
<dbReference type="GeneTree" id="ENSGT00950000183102"/>
<dbReference type="HOGENOM" id="CLU_043596_1_0_1"/>
<dbReference type="InParanoid" id="Q91VJ5"/>
<dbReference type="OMA" id="IYHECSK"/>
<dbReference type="OrthoDB" id="42462at2759"/>
<dbReference type="PhylomeDB" id="Q91VJ5"/>
<dbReference type="TreeFam" id="TF320689"/>
<dbReference type="Reactome" id="R-MMU-72163">
    <property type="pathway name" value="mRNA Splicing - Major Pathway"/>
</dbReference>
<dbReference type="BioGRID-ORCS" id="54633">
    <property type="hits" value="4 hits in 79 CRISPR screens"/>
</dbReference>
<dbReference type="PRO" id="PR:Q91VJ5"/>
<dbReference type="Proteomes" id="UP000000589">
    <property type="component" value="Chromosome X"/>
</dbReference>
<dbReference type="RNAct" id="Q91VJ5">
    <property type="molecule type" value="protein"/>
</dbReference>
<dbReference type="Bgee" id="ENSMUSG00000031157">
    <property type="expression patterns" value="Expressed in saccule of membranous labyrinth and 277 other cell types or tissues"/>
</dbReference>
<dbReference type="ExpressionAtlas" id="Q91VJ5">
    <property type="expression patterns" value="baseline and differential"/>
</dbReference>
<dbReference type="GO" id="GO:0036064">
    <property type="term" value="C:ciliary basal body"/>
    <property type="evidence" value="ECO:0007669"/>
    <property type="project" value="Ensembl"/>
</dbReference>
<dbReference type="GO" id="GO:0005737">
    <property type="term" value="C:cytoplasm"/>
    <property type="evidence" value="ECO:0000314"/>
    <property type="project" value="MGI"/>
</dbReference>
<dbReference type="GO" id="GO:0010494">
    <property type="term" value="C:cytoplasmic stress granule"/>
    <property type="evidence" value="ECO:0000314"/>
    <property type="project" value="MGI"/>
</dbReference>
<dbReference type="GO" id="GO:0005829">
    <property type="term" value="C:cytosol"/>
    <property type="evidence" value="ECO:0007669"/>
    <property type="project" value="Ensembl"/>
</dbReference>
<dbReference type="GO" id="GO:0071598">
    <property type="term" value="C:neuronal ribonucleoprotein granule"/>
    <property type="evidence" value="ECO:0000314"/>
    <property type="project" value="MGI"/>
</dbReference>
<dbReference type="GO" id="GO:0016607">
    <property type="term" value="C:nuclear speck"/>
    <property type="evidence" value="ECO:0000314"/>
    <property type="project" value="UniProtKB"/>
</dbReference>
<dbReference type="GO" id="GO:0005634">
    <property type="term" value="C:nucleus"/>
    <property type="evidence" value="ECO:0000314"/>
    <property type="project" value="MGI"/>
</dbReference>
<dbReference type="GO" id="GO:0003690">
    <property type="term" value="F:double-stranded DNA binding"/>
    <property type="evidence" value="ECO:0000250"/>
    <property type="project" value="UniProtKB"/>
</dbReference>
<dbReference type="GO" id="GO:0043021">
    <property type="term" value="F:ribonucleoprotein complex binding"/>
    <property type="evidence" value="ECO:0000266"/>
    <property type="project" value="MGI"/>
</dbReference>
<dbReference type="GO" id="GO:0002218">
    <property type="term" value="P:activation of innate immune response"/>
    <property type="evidence" value="ECO:0000250"/>
    <property type="project" value="UniProtKB"/>
</dbReference>
<dbReference type="GO" id="GO:0000380">
    <property type="term" value="P:alternative mRNA splicing, via spliceosome"/>
    <property type="evidence" value="ECO:0000315"/>
    <property type="project" value="UniProtKB"/>
</dbReference>
<dbReference type="GO" id="GO:0071360">
    <property type="term" value="P:cellular response to exogenous dsRNA"/>
    <property type="evidence" value="ECO:0000250"/>
    <property type="project" value="UniProtKB"/>
</dbReference>
<dbReference type="GO" id="GO:0051607">
    <property type="term" value="P:defense response to virus"/>
    <property type="evidence" value="ECO:0000250"/>
    <property type="project" value="UniProtKB"/>
</dbReference>
<dbReference type="GO" id="GO:0045087">
    <property type="term" value="P:innate immune response"/>
    <property type="evidence" value="ECO:0007669"/>
    <property type="project" value="UniProtKB-KW"/>
</dbReference>
<dbReference type="GO" id="GO:0031175">
    <property type="term" value="P:neuron projection development"/>
    <property type="evidence" value="ECO:0000315"/>
    <property type="project" value="UniProtKB"/>
</dbReference>
<dbReference type="GO" id="GO:0002230">
    <property type="term" value="P:positive regulation of defense response to virus by host"/>
    <property type="evidence" value="ECO:0000250"/>
    <property type="project" value="UniProtKB"/>
</dbReference>
<dbReference type="GO" id="GO:0032481">
    <property type="term" value="P:positive regulation of type I interferon production"/>
    <property type="evidence" value="ECO:0000250"/>
    <property type="project" value="UniProtKB"/>
</dbReference>
<dbReference type="GO" id="GO:0048814">
    <property type="term" value="P:regulation of dendrite morphogenesis"/>
    <property type="evidence" value="ECO:0000315"/>
    <property type="project" value="MGI"/>
</dbReference>
<dbReference type="GO" id="GO:0043484">
    <property type="term" value="P:regulation of RNA splicing"/>
    <property type="evidence" value="ECO:0000266"/>
    <property type="project" value="MGI"/>
</dbReference>
<dbReference type="FunFam" id="3.40.30.10:FF:000140">
    <property type="entry name" value="polyglutamine-binding protein 1 isoform X1"/>
    <property type="match status" value="1"/>
</dbReference>
<dbReference type="Gene3D" id="2.20.70.10">
    <property type="match status" value="1"/>
</dbReference>
<dbReference type="Gene3D" id="3.40.30.10">
    <property type="entry name" value="Glutaredoxin"/>
    <property type="match status" value="1"/>
</dbReference>
<dbReference type="InterPro" id="IPR001202">
    <property type="entry name" value="WW_dom"/>
</dbReference>
<dbReference type="InterPro" id="IPR036020">
    <property type="entry name" value="WW_dom_sf"/>
</dbReference>
<dbReference type="PANTHER" id="PTHR21737">
    <property type="entry name" value="POLYGLUTAMINE BINDING PROTEIN 1/MARVEL MEMBRANE-ASSOCIATING DOMAIN CONTAINING 3"/>
    <property type="match status" value="1"/>
</dbReference>
<dbReference type="PANTHER" id="PTHR21737:SF3">
    <property type="entry name" value="POLYGLUTAMINE-BINDING PROTEIN 1"/>
    <property type="match status" value="1"/>
</dbReference>
<dbReference type="SMART" id="SM00456">
    <property type="entry name" value="WW"/>
    <property type="match status" value="1"/>
</dbReference>
<dbReference type="SUPFAM" id="SSF51045">
    <property type="entry name" value="WW domain"/>
    <property type="match status" value="1"/>
</dbReference>
<dbReference type="PROSITE" id="PS50020">
    <property type="entry name" value="WW_DOMAIN_2"/>
    <property type="match status" value="1"/>
</dbReference>
<comment type="function">
    <text evidence="1 5">Intrinsically disordered protein that acts as a scaffold, and which is involved in different processes, such as pre-mRNA splicing, transcription regulation, innate immunity and neuron development (By similarity). Interacts with splicing-related factors via the intrinsically disordered region and regulates alternative splicing of target pre-mRNA species (PubMed:23512658). May suppress the ability of POU3F2 to transactivate the DRD1 gene in a POU3F2 dependent manner (By similarity). Can activate transcription directly or via association with the transcription machinery (By similarity). May be involved in ATXN1 mutant-induced cell death (By similarity). The interaction with ATXN1 mutant reduces levels of phosphorylated RNA polymerase II large subunit (By similarity). Involved in the assembly of cytoplasmic stress granule, possibly by participating in the transport of neuronal RNA granules (By similarity). Also acts as an innate immune sensor of infection by retroviruses, by detecting the presence of reverse-transcribed DNA in the cytosol (By similarity). Directly binds retroviral reverse-transcribed DNA in the cytosol and interacts with CGAS, leading to activate the cGAS-STING signaling pathway, triggering type-I interferon production (By similarity).</text>
</comment>
<comment type="subunit">
    <text evidence="1">Interacts with POU3F2/Brn-2, ATXN1, TXNL4A, HTT and AR. Interaction with ATXN1 correlates positively with the length of the polyglutamine tract. Interacts with RNA polymerase II large subunit in a phosphorylation-dependent manner. Forms a ternary complex with ATXN1 mutant and phosphorylated RNA polymerase II. Interacts (via C-terminus) with TXNL4A and CD2BP2. Interacts (via WW domain) with ATN1 and SF3B1, and may interact with additional splice factors. Interacts (via WW domain) with WBP11; Leading to reduce interaction between PQBP1 and TXNL4A. Interacts with CAPRIN1. Interacts with DDX1. Interacts with SFPQ. Interacts with KHSRP.</text>
</comment>
<comment type="subcellular location">
    <subcellularLocation>
        <location evidence="5">Nucleus</location>
    </subcellularLocation>
    <subcellularLocation>
        <location evidence="5">Nucleus speckle</location>
    </subcellularLocation>
    <subcellularLocation>
        <location evidence="1">Cytoplasmic granule</location>
    </subcellularLocation>
    <text evidence="1 5">Colocalizes with SRSF2 in nuclear speckles (PubMed:23512658). Colocalized with POU3F2. Colocalized with ATXN1 in nuclear inclusion bodies. Localizes to cytoplasmic stress granules (By similarity).</text>
</comment>
<comment type="tissue specificity">
    <text evidence="4 5">Detected in brain cortex and hippocampus neurons (at protein level). Expressed in brain with high level in cerebellar cortex, hippocampus and olfactory bulb.</text>
</comment>
<comment type="domain">
    <text evidence="1">The WW domain may play a role as a transcriptional activator directly or via association with the transcription machinery. The WW domain mediates interaction with WBP11, ATN1, SF3B1 and the C-terminal domain of the RNA polymerase II large subunit.</text>
</comment>
<comment type="domain">
    <text evidence="1">Except for the WW domain, the protein is intrinsically disordered.</text>
</comment>
<accession>Q91VJ5</accession>
<accession>Q80WW2</accession>
<accession>Q9ER43</accession>
<accession>Q9QYY2</accession>
<reference key="1">
    <citation type="submission" date="2000-11" db="EMBL/GenBank/DDBJ databases">
        <authorList>
            <person name="Okazawa H."/>
        </authorList>
    </citation>
    <scope>NUCLEOTIDE SEQUENCE [MRNA]</scope>
    <scope>NUCLEOTIDE SEQUENCE [GENOMIC DNA] OF 24-263</scope>
</reference>
<reference key="2">
    <citation type="journal article" date="2005" name="Science">
        <title>The transcriptional landscape of the mammalian genome.</title>
        <authorList>
            <person name="Carninci P."/>
            <person name="Kasukawa T."/>
            <person name="Katayama S."/>
            <person name="Gough J."/>
            <person name="Frith M.C."/>
            <person name="Maeda N."/>
            <person name="Oyama R."/>
            <person name="Ravasi T."/>
            <person name="Lenhard B."/>
            <person name="Wells C."/>
            <person name="Kodzius R."/>
            <person name="Shimokawa K."/>
            <person name="Bajic V.B."/>
            <person name="Brenner S.E."/>
            <person name="Batalov S."/>
            <person name="Forrest A.R."/>
            <person name="Zavolan M."/>
            <person name="Davis M.J."/>
            <person name="Wilming L.G."/>
            <person name="Aidinis V."/>
            <person name="Allen J.E."/>
            <person name="Ambesi-Impiombato A."/>
            <person name="Apweiler R."/>
            <person name="Aturaliya R.N."/>
            <person name="Bailey T.L."/>
            <person name="Bansal M."/>
            <person name="Baxter L."/>
            <person name="Beisel K.W."/>
            <person name="Bersano T."/>
            <person name="Bono H."/>
            <person name="Chalk A.M."/>
            <person name="Chiu K.P."/>
            <person name="Choudhary V."/>
            <person name="Christoffels A."/>
            <person name="Clutterbuck D.R."/>
            <person name="Crowe M.L."/>
            <person name="Dalla E."/>
            <person name="Dalrymple B.P."/>
            <person name="de Bono B."/>
            <person name="Della Gatta G."/>
            <person name="di Bernardo D."/>
            <person name="Down T."/>
            <person name="Engstrom P."/>
            <person name="Fagiolini M."/>
            <person name="Faulkner G."/>
            <person name="Fletcher C.F."/>
            <person name="Fukushima T."/>
            <person name="Furuno M."/>
            <person name="Futaki S."/>
            <person name="Gariboldi M."/>
            <person name="Georgii-Hemming P."/>
            <person name="Gingeras T.R."/>
            <person name="Gojobori T."/>
            <person name="Green R.E."/>
            <person name="Gustincich S."/>
            <person name="Harbers M."/>
            <person name="Hayashi Y."/>
            <person name="Hensch T.K."/>
            <person name="Hirokawa N."/>
            <person name="Hill D."/>
            <person name="Huminiecki L."/>
            <person name="Iacono M."/>
            <person name="Ikeo K."/>
            <person name="Iwama A."/>
            <person name="Ishikawa T."/>
            <person name="Jakt M."/>
            <person name="Kanapin A."/>
            <person name="Katoh M."/>
            <person name="Kawasawa Y."/>
            <person name="Kelso J."/>
            <person name="Kitamura H."/>
            <person name="Kitano H."/>
            <person name="Kollias G."/>
            <person name="Krishnan S.P."/>
            <person name="Kruger A."/>
            <person name="Kummerfeld S.K."/>
            <person name="Kurochkin I.V."/>
            <person name="Lareau L.F."/>
            <person name="Lazarevic D."/>
            <person name="Lipovich L."/>
            <person name="Liu J."/>
            <person name="Liuni S."/>
            <person name="McWilliam S."/>
            <person name="Madan Babu M."/>
            <person name="Madera M."/>
            <person name="Marchionni L."/>
            <person name="Matsuda H."/>
            <person name="Matsuzawa S."/>
            <person name="Miki H."/>
            <person name="Mignone F."/>
            <person name="Miyake S."/>
            <person name="Morris K."/>
            <person name="Mottagui-Tabar S."/>
            <person name="Mulder N."/>
            <person name="Nakano N."/>
            <person name="Nakauchi H."/>
            <person name="Ng P."/>
            <person name="Nilsson R."/>
            <person name="Nishiguchi S."/>
            <person name="Nishikawa S."/>
            <person name="Nori F."/>
            <person name="Ohara O."/>
            <person name="Okazaki Y."/>
            <person name="Orlando V."/>
            <person name="Pang K.C."/>
            <person name="Pavan W.J."/>
            <person name="Pavesi G."/>
            <person name="Pesole G."/>
            <person name="Petrovsky N."/>
            <person name="Piazza S."/>
            <person name="Reed J."/>
            <person name="Reid J.F."/>
            <person name="Ring B.Z."/>
            <person name="Ringwald M."/>
            <person name="Rost B."/>
            <person name="Ruan Y."/>
            <person name="Salzberg S.L."/>
            <person name="Sandelin A."/>
            <person name="Schneider C."/>
            <person name="Schoenbach C."/>
            <person name="Sekiguchi K."/>
            <person name="Semple C.A."/>
            <person name="Seno S."/>
            <person name="Sessa L."/>
            <person name="Sheng Y."/>
            <person name="Shibata Y."/>
            <person name="Shimada H."/>
            <person name="Shimada K."/>
            <person name="Silva D."/>
            <person name="Sinclair B."/>
            <person name="Sperling S."/>
            <person name="Stupka E."/>
            <person name="Sugiura K."/>
            <person name="Sultana R."/>
            <person name="Takenaka Y."/>
            <person name="Taki K."/>
            <person name="Tammoja K."/>
            <person name="Tan S.L."/>
            <person name="Tang S."/>
            <person name="Taylor M.S."/>
            <person name="Tegner J."/>
            <person name="Teichmann S.A."/>
            <person name="Ueda H.R."/>
            <person name="van Nimwegen E."/>
            <person name="Verardo R."/>
            <person name="Wei C.L."/>
            <person name="Yagi K."/>
            <person name="Yamanishi H."/>
            <person name="Zabarovsky E."/>
            <person name="Zhu S."/>
            <person name="Zimmer A."/>
            <person name="Hide W."/>
            <person name="Bult C."/>
            <person name="Grimmond S.M."/>
            <person name="Teasdale R.D."/>
            <person name="Liu E.T."/>
            <person name="Brusic V."/>
            <person name="Quackenbush J."/>
            <person name="Wahlestedt C."/>
            <person name="Mattick J.S."/>
            <person name="Hume D.A."/>
            <person name="Kai C."/>
            <person name="Sasaki D."/>
            <person name="Tomaru Y."/>
            <person name="Fukuda S."/>
            <person name="Kanamori-Katayama M."/>
            <person name="Suzuki M."/>
            <person name="Aoki J."/>
            <person name="Arakawa T."/>
            <person name="Iida J."/>
            <person name="Imamura K."/>
            <person name="Itoh M."/>
            <person name="Kato T."/>
            <person name="Kawaji H."/>
            <person name="Kawagashira N."/>
            <person name="Kawashima T."/>
            <person name="Kojima M."/>
            <person name="Kondo S."/>
            <person name="Konno H."/>
            <person name="Nakano K."/>
            <person name="Ninomiya N."/>
            <person name="Nishio T."/>
            <person name="Okada M."/>
            <person name="Plessy C."/>
            <person name="Shibata K."/>
            <person name="Shiraki T."/>
            <person name="Suzuki S."/>
            <person name="Tagami M."/>
            <person name="Waki K."/>
            <person name="Watahiki A."/>
            <person name="Okamura-Oho Y."/>
            <person name="Suzuki H."/>
            <person name="Kawai J."/>
            <person name="Hayashizaki Y."/>
        </authorList>
    </citation>
    <scope>NUCLEOTIDE SEQUENCE [LARGE SCALE MRNA]</scope>
    <source>
        <strain>C57BL/6J</strain>
        <tissue>Embryo</tissue>
    </source>
</reference>
<reference key="3">
    <citation type="journal article" date="2004" name="Genome Res.">
        <title>The status, quality, and expansion of the NIH full-length cDNA project: the Mammalian Gene Collection (MGC).</title>
        <authorList>
            <consortium name="The MGC Project Team"/>
        </authorList>
    </citation>
    <scope>NUCLEOTIDE SEQUENCE [LARGE SCALE MRNA]</scope>
    <source>
        <strain>C57BL/6J</strain>
        <strain>FVB/N</strain>
        <tissue>Mammary tumor</tissue>
    </source>
</reference>
<reference key="4">
    <citation type="journal article" date="1999" name="Hum. Mol. Genet.">
        <title>PQBP-1, a novel polyglutamine tract binding protein, inhibits transcription activation by Brn-2 and affects cell survival.</title>
        <authorList>
            <person name="Waragai M."/>
            <person name="Lammers C.-H."/>
            <person name="Takeuchi S."/>
            <person name="Imafuku I."/>
            <person name="Udagawa Y."/>
            <person name="Kanazawa I."/>
            <person name="Kawabata M."/>
            <person name="Mouradian M.M."/>
            <person name="Okazawa H."/>
        </authorList>
    </citation>
    <scope>TISSUE SPECIFICITY</scope>
</reference>
<reference key="5">
    <citation type="journal article" date="2010" name="Cell">
        <title>A tissue-specific atlas of mouse protein phosphorylation and expression.</title>
        <authorList>
            <person name="Huttlin E.L."/>
            <person name="Jedrychowski M.P."/>
            <person name="Elias J.E."/>
            <person name="Goswami T."/>
            <person name="Rad R."/>
            <person name="Beausoleil S.A."/>
            <person name="Villen J."/>
            <person name="Haas W."/>
            <person name="Sowa M.E."/>
            <person name="Gygi S.P."/>
        </authorList>
    </citation>
    <scope>IDENTIFICATION BY MASS SPECTROMETRY [LARGE SCALE ANALYSIS]</scope>
    <source>
        <tissue>Pancreas</tissue>
    </source>
</reference>
<reference key="6">
    <citation type="journal article" date="2013" name="Genes Dev.">
        <title>PQBP1, a factor linked to intellectual disability, affects alternative splicing associated with neurite outgrowth.</title>
        <authorList>
            <person name="Wang Q."/>
            <person name="Moore M.J."/>
            <person name="Adelmant G."/>
            <person name="Marto J.A."/>
            <person name="Silver P.A."/>
        </authorList>
    </citation>
    <scope>FUNCTION</scope>
    <scope>SUBCELLULAR LOCATION</scope>
    <scope>TISSUE SPECIFICITY</scope>
</reference>